<organism>
    <name type="scientific">Pseudomonas mevalonii</name>
    <dbReference type="NCBI Taxonomy" id="32044"/>
    <lineage>
        <taxon>Bacteria</taxon>
        <taxon>Pseudomonadati</taxon>
        <taxon>Pseudomonadota</taxon>
        <taxon>Gammaproteobacteria</taxon>
        <taxon>Pseudomonadales</taxon>
        <taxon>Pseudomonadaceae</taxon>
        <taxon>Pseudomonas</taxon>
    </lineage>
</organism>
<sequence>MQAVKVFEVGPRDGLQNERQPLSVAARVGLIGELAGTGLRHIEAGAFVSPRWVPQMAGSDEVLRQLPSNDGVSYTALVPNRQGFEAAQRAGCREVAVFAAASEAFSRNNINCSIDESFERFTPVLRAANEASIRVRGYVSCVLGCPFSGAVAPEAVAKVARRLYELGCYEISLGDTIGAGRPDETAQLFELCARQLPVAALAGHFHDTWGMAIANVHAALAQGVRTFDSSVAGLGGCPYSPGASGNVATEDLLYLLHGLGYSTGVDLEAVAQVGVRISAQLGTANRSRAGLALAARSAREH</sequence>
<comment type="function">
    <text evidence="5">Involved in the catabolism of branched amino acids such as leucine.</text>
</comment>
<comment type="catalytic activity">
    <reaction evidence="3">
        <text>(3S)-3-hydroxy-3-methylglutaryl-CoA = acetoacetate + acetyl-CoA</text>
        <dbReference type="Rhea" id="RHEA:24404"/>
        <dbReference type="ChEBI" id="CHEBI:13705"/>
        <dbReference type="ChEBI" id="CHEBI:43074"/>
        <dbReference type="ChEBI" id="CHEBI:57288"/>
        <dbReference type="EC" id="4.1.3.4"/>
    </reaction>
</comment>
<comment type="pathway">
    <text>Metabolic intermediate metabolism; (S)-3-hydroxy-3-methylglutaryl-CoA degradation; acetoacetate from (S)-3-hydroxy-3-methylglutaryl-CoA: step 1/1.</text>
</comment>
<comment type="similarity">
    <text evidence="5">Belongs to the HMG-CoA lyase family.</text>
</comment>
<accession>P13703</accession>
<reference key="1">
    <citation type="journal article" date="1989" name="J. Bacteriol.">
        <title>Nucleotide sequence and expression in Escherichia coli of the 3-hydroxy-3-methylglutaryl coenzyme A lyase gene of Pseudomonas mevalonii.</title>
        <authorList>
            <person name="Anderson D.H."/>
            <person name="Rodwell V.W."/>
        </authorList>
    </citation>
    <scope>NUCLEOTIDE SEQUENCE [GENOMIC DNA]</scope>
</reference>
<reference key="2">
    <citation type="journal article" date="1989" name="J. Bacteriol.">
        <title>Cloning, sequencing, and overexpression of mvaA, which encodes Pseudomonas mevalonii 3-hydroxy-3-methylglutaryl coenzyme A reductase.</title>
        <authorList>
            <person name="Beach M.J."/>
            <person name="Rodwell V.W."/>
        </authorList>
    </citation>
    <scope>NUCLEOTIDE SEQUENCE [GENOMIC DNA]</scope>
</reference>
<reference key="3">
    <citation type="journal article" date="1992" name="Biochemistry">
        <title>3-hydroxy-3-methylglutaryl coenzyme A lyase: affinity labeling of the Pseudomonas mevalonii enzyme and assignment of cysteine-237 to the active site.</title>
        <authorList>
            <person name="Hruz P.W."/>
            <person name="Narasimhan C."/>
            <person name="Miziorko H.M."/>
        </authorList>
    </citation>
    <scope>ACTIVE SITE</scope>
</reference>
<protein>
    <recommendedName>
        <fullName>Hydroxymethylglutaryl-CoA lyase</fullName>
        <shortName>HL</shortName>
        <shortName>HMG-CoA lyase</shortName>
        <ecNumber>4.1.3.4</ecNumber>
    </recommendedName>
    <alternativeName>
        <fullName>3-hydroxy-3-methylglutarate-CoA lyase</fullName>
    </alternativeName>
</protein>
<keyword id="KW-0456">Lyase</keyword>
<keyword id="KW-0479">Metal-binding</keyword>
<dbReference type="EC" id="4.1.3.4"/>
<dbReference type="EMBL" id="M24016">
    <property type="protein sequence ID" value="AAA25896.1"/>
    <property type="molecule type" value="Genomic_DNA"/>
</dbReference>
<dbReference type="EMBL" id="M31807">
    <property type="protein sequence ID" value="AAA25895.1"/>
    <property type="molecule type" value="Genomic_DNA"/>
</dbReference>
<dbReference type="SMR" id="P13703"/>
<dbReference type="BioCyc" id="MetaCyc:MONOMER-11828"/>
<dbReference type="UniPathway" id="UPA00896">
    <property type="reaction ID" value="UER00863"/>
</dbReference>
<dbReference type="GO" id="GO:0004419">
    <property type="term" value="F:hydroxymethylglutaryl-CoA lyase activity"/>
    <property type="evidence" value="ECO:0000250"/>
    <property type="project" value="UniProtKB"/>
</dbReference>
<dbReference type="GO" id="GO:0046872">
    <property type="term" value="F:metal ion binding"/>
    <property type="evidence" value="ECO:0000250"/>
    <property type="project" value="UniProtKB"/>
</dbReference>
<dbReference type="GO" id="GO:0046951">
    <property type="term" value="P:ketone body biosynthetic process"/>
    <property type="evidence" value="ECO:0007669"/>
    <property type="project" value="TreeGrafter"/>
</dbReference>
<dbReference type="GO" id="GO:0006552">
    <property type="term" value="P:L-leucine catabolic process"/>
    <property type="evidence" value="ECO:0007669"/>
    <property type="project" value="TreeGrafter"/>
</dbReference>
<dbReference type="CDD" id="cd07938">
    <property type="entry name" value="DRE_TIM_HMGL"/>
    <property type="match status" value="1"/>
</dbReference>
<dbReference type="FunFam" id="3.20.20.70:FF:000201">
    <property type="entry name" value="Hydroxymethylglutaryl-CoA lyase"/>
    <property type="match status" value="1"/>
</dbReference>
<dbReference type="Gene3D" id="3.20.20.70">
    <property type="entry name" value="Aldolase class I"/>
    <property type="match status" value="1"/>
</dbReference>
<dbReference type="InterPro" id="IPR013785">
    <property type="entry name" value="Aldolase_TIM"/>
</dbReference>
<dbReference type="InterPro" id="IPR000138">
    <property type="entry name" value="HMG_CoA_lyase_AS"/>
</dbReference>
<dbReference type="InterPro" id="IPR043594">
    <property type="entry name" value="HMGL"/>
</dbReference>
<dbReference type="InterPro" id="IPR000891">
    <property type="entry name" value="PYR_CT"/>
</dbReference>
<dbReference type="NCBIfam" id="NF004283">
    <property type="entry name" value="PRK05692.1"/>
    <property type="match status" value="1"/>
</dbReference>
<dbReference type="PANTHER" id="PTHR42738">
    <property type="entry name" value="HYDROXYMETHYLGLUTARYL-COA LYASE"/>
    <property type="match status" value="1"/>
</dbReference>
<dbReference type="PANTHER" id="PTHR42738:SF7">
    <property type="entry name" value="HYDROXYMETHYLGLUTARYL-COA LYASE"/>
    <property type="match status" value="1"/>
</dbReference>
<dbReference type="Pfam" id="PF00682">
    <property type="entry name" value="HMGL-like"/>
    <property type="match status" value="1"/>
</dbReference>
<dbReference type="SUPFAM" id="SSF51569">
    <property type="entry name" value="Aldolase"/>
    <property type="match status" value="1"/>
</dbReference>
<dbReference type="PROSITE" id="PS01062">
    <property type="entry name" value="HMG_COA_LYASE"/>
    <property type="match status" value="1"/>
</dbReference>
<dbReference type="PROSITE" id="PS50991">
    <property type="entry name" value="PYR_CT"/>
    <property type="match status" value="1"/>
</dbReference>
<gene>
    <name type="primary">mvaB</name>
</gene>
<feature type="chain" id="PRO_0000151521" description="Hydroxymethylglutaryl-CoA lyase">
    <location>
        <begin position="1"/>
        <end position="301"/>
    </location>
</feature>
<feature type="domain" description="Pyruvate carboxyltransferase" evidence="2">
    <location>
        <begin position="4"/>
        <end position="271"/>
    </location>
</feature>
<feature type="active site" evidence="3 4">
    <location>
        <position position="237"/>
    </location>
</feature>
<feature type="binding site" evidence="1">
    <location>
        <position position="12"/>
    </location>
    <ligand>
        <name>substrate</name>
    </ligand>
</feature>
<feature type="binding site" evidence="1">
    <location>
        <position position="13"/>
    </location>
    <ligand>
        <name>a divalent metal cation</name>
        <dbReference type="ChEBI" id="CHEBI:60240"/>
    </ligand>
</feature>
<feature type="binding site" evidence="1">
    <location>
        <position position="204"/>
    </location>
    <ligand>
        <name>a divalent metal cation</name>
        <dbReference type="ChEBI" id="CHEBI:60240"/>
    </ligand>
</feature>
<feature type="binding site" evidence="1">
    <location>
        <position position="206"/>
    </location>
    <ligand>
        <name>a divalent metal cation</name>
        <dbReference type="ChEBI" id="CHEBI:60240"/>
    </ligand>
</feature>
<feature type="binding site" evidence="1">
    <location>
        <position position="246"/>
    </location>
    <ligand>
        <name>a divalent metal cation</name>
        <dbReference type="ChEBI" id="CHEBI:60240"/>
    </ligand>
</feature>
<name>HMGCL_PSEMV</name>
<evidence type="ECO:0000250" key="1"/>
<evidence type="ECO:0000255" key="2">
    <source>
        <dbReference type="PROSITE-ProRule" id="PRU01151"/>
    </source>
</evidence>
<evidence type="ECO:0000255" key="3">
    <source>
        <dbReference type="PROSITE-ProRule" id="PRU10115"/>
    </source>
</evidence>
<evidence type="ECO:0000269" key="4">
    <source>
    </source>
</evidence>
<evidence type="ECO:0000305" key="5"/>
<proteinExistence type="inferred from homology"/>